<gene>
    <name type="primary">PDS5</name>
    <name type="ordered locus">YMR076C</name>
    <name type="ORF">YM9582.01C</name>
    <name type="ORF">YM9916.15C</name>
</gene>
<organism>
    <name type="scientific">Saccharomyces cerevisiae (strain ATCC 204508 / S288c)</name>
    <name type="common">Baker's yeast</name>
    <dbReference type="NCBI Taxonomy" id="559292"/>
    <lineage>
        <taxon>Eukaryota</taxon>
        <taxon>Fungi</taxon>
        <taxon>Dikarya</taxon>
        <taxon>Ascomycota</taxon>
        <taxon>Saccharomycotina</taxon>
        <taxon>Saccharomycetes</taxon>
        <taxon>Saccharomycetales</taxon>
        <taxon>Saccharomycetaceae</taxon>
        <taxon>Saccharomyces</taxon>
    </lineage>
</organism>
<name>PDS5_YEAST</name>
<sequence length="1277" mass="147041">MAKGAVTKLKFNSPIISTSDQLISTNELLDRLKALHEELASLDQDNTDLTGLDKYRDALVSRKLLKHKDVGIRAFTACCLSDILRLYAPDAPYTDAQLTDIFKLVLSQFEQLGDQENGYHIQQTYLITKLLEYRSIVLLADLPSSNNLLIELFHIFYDPNKSFPARLFNVIGGILGEVISEFDSVPLEVLRLIFNKFLTYNPNEIPEGLNVTSDCGYEVSLILCDTYSNRMSRHLTKYYSEIIHEATNDDNNSRLLTVVVKLHKLVLRLWETVPELINAVIGFIYHELSSENELFRKEATKLIGQILTSYSDLNFVSTHSDTFKAWISKIADISPDVRVEWTESIPQIIATREDISKELNQALAKTFIDSDPRVRRTSVMIFNKVPVTEIWKNITNKAIYTSLLHLAREKHKEVRELCINTMAKFYSNSLNEIERTYQNKEIWEIIDTIPSTLYNLYYINDLNINEQVDSVIFEYLLPFEPDNDKRVHRLLTVLSHFDKKAFTSFFAFNARQIKISFAISKYIDFSKFLNNQESMSSSQGPIVMNKYNQTLQWLASGLSDSTKAIDALETIKQFNDERIFYLLNACVTNDIPFLTFKNCYNELVSKLQTPGLFKKYNISTGASIMPRDIAKVIQILLFRASPIIYNVSNISVLLNLSNNSDAKQLDLKRRILDDISKVNPTLFKDQIRTLKTIIKDLDDPDAEKNDNLSLEEALKTLYKASKTLKDQVDFDDTFFFTKLYDFAVESKPEITKYATKLIALSPKAEETLKKIKIRILPLDLQKDKYFTSHIIVLMEIFKKFPHVLNDDSTDIISYLIKEVLLSNQVVGDSKKEIDWVEDSLLSDTKYSAIGNKVFTLKLFTNKLRSIAPDVPRDELAESFTEKTMKLFFYLIASGGELISEFNKEFYPTPSNYQTKLRCVAGIQVLKLARISNLNNFIKPSDIIKLINLVEDESLPVRKTFLEQLKDYVANELISIKFLPLVFFTAYEPDVELKTTTKIWINFTFGLKSFKKGTIFERALPRLIHAIAHHPDIVGGLDSEGDAYLNALTTAIDYLLFYFDSIAAQENFSLLYYLSERVKNYQDKLVEDEIDEEEGPQKEEAPKKHRPYGQKMYIIGELSQMILLNLKEKKNWQHSAYPGKLNLPSDLFKPFATVQEAQLSFKTYIPESLTEKIQNNIKAKIGRILHTSQTQRQRLQKRLLAHENNESQKKKKKVHHARSQADDEEGDGDRESDSDDDSYSPSNKNETKKGHENIVMKKLRVRKEVDYKDDEDDDIEMT</sequence>
<keyword id="KW-0002">3D-structure</keyword>
<keyword id="KW-0007">Acetylation</keyword>
<keyword id="KW-0131">Cell cycle</keyword>
<keyword id="KW-0132">Cell division</keyword>
<keyword id="KW-0498">Mitosis</keyword>
<keyword id="KW-0539">Nucleus</keyword>
<keyword id="KW-0597">Phosphoprotein</keyword>
<keyword id="KW-1185">Reference proteome</keyword>
<accession>Q04264</accession>
<accession>D6VZQ0</accession>
<accession>Q04780</accession>
<reference key="1">
    <citation type="journal article" date="1997" name="Nature">
        <title>The nucleotide sequence of Saccharomyces cerevisiae chromosome XIII.</title>
        <authorList>
            <person name="Bowman S."/>
            <person name="Churcher C.M."/>
            <person name="Badcock K."/>
            <person name="Brown D."/>
            <person name="Chillingworth T."/>
            <person name="Connor R."/>
            <person name="Dedman K."/>
            <person name="Devlin K."/>
            <person name="Gentles S."/>
            <person name="Hamlin N."/>
            <person name="Hunt S."/>
            <person name="Jagels K."/>
            <person name="Lye G."/>
            <person name="Moule S."/>
            <person name="Odell C."/>
            <person name="Pearson D."/>
            <person name="Rajandream M.A."/>
            <person name="Rice P."/>
            <person name="Skelton J."/>
            <person name="Walsh S.V."/>
            <person name="Whitehead S."/>
            <person name="Barrell B.G."/>
        </authorList>
    </citation>
    <scope>NUCLEOTIDE SEQUENCE [LARGE SCALE GENOMIC DNA]</scope>
    <source>
        <strain>ATCC 204508 / S288c</strain>
    </source>
</reference>
<reference key="2">
    <citation type="journal article" date="2014" name="G3 (Bethesda)">
        <title>The reference genome sequence of Saccharomyces cerevisiae: Then and now.</title>
        <authorList>
            <person name="Engel S.R."/>
            <person name="Dietrich F.S."/>
            <person name="Fisk D.G."/>
            <person name="Binkley G."/>
            <person name="Balakrishnan R."/>
            <person name="Costanzo M.C."/>
            <person name="Dwight S.S."/>
            <person name="Hitz B.C."/>
            <person name="Karra K."/>
            <person name="Nash R.S."/>
            <person name="Weng S."/>
            <person name="Wong E.D."/>
            <person name="Lloyd P."/>
            <person name="Skrzypek M.S."/>
            <person name="Miyasato S.R."/>
            <person name="Simison M."/>
            <person name="Cherry J.M."/>
        </authorList>
    </citation>
    <scope>GENOME REANNOTATION</scope>
    <source>
        <strain>ATCC 204508 / S288c</strain>
    </source>
</reference>
<reference key="3">
    <citation type="journal article" date="2000" name="J. Cell Biol.">
        <title>Pds5p is an essential chromosomal protein required for both sister chromatid cohesion and condensation in Saccharomyces cerevisiae.</title>
        <authorList>
            <person name="Hartman T."/>
            <person name="Stead K."/>
            <person name="Koshland D."/>
            <person name="Guacci V."/>
        </authorList>
    </citation>
    <scope>FUNCTION</scope>
    <scope>SUBCELLULAR LOCATION</scope>
</reference>
<reference key="4">
    <citation type="journal article" date="2000" name="Curr. Biol.">
        <title>Pds5 cooperates with cohesin in maintaining sister chromatid cohesion.</title>
        <authorList>
            <person name="Panizza S."/>
            <person name="Tanaka T."/>
            <person name="Hochwagen A."/>
            <person name="Eisenhaber F."/>
            <person name="Nasmyth K."/>
        </authorList>
    </citation>
    <scope>FUNCTION</scope>
</reference>
<reference key="5">
    <citation type="journal article" date="2002" name="Curr. Biol.">
        <title>Eco1 is a novel acetyltransferase that can acetylate proteins involved in cohesion.</title>
        <authorList>
            <person name="Ivanov D."/>
            <person name="Schleiffer A."/>
            <person name="Eisenhaber F."/>
            <person name="Mechtler K."/>
            <person name="Haering C.H."/>
            <person name="Nasmyth K."/>
        </authorList>
    </citation>
    <scope>ACETYLATION</scope>
</reference>
<reference key="6">
    <citation type="journal article" date="2003" name="Nature">
        <title>Global analysis of protein localization in budding yeast.</title>
        <authorList>
            <person name="Huh W.-K."/>
            <person name="Falvo J.V."/>
            <person name="Gerke L.C."/>
            <person name="Carroll A.S."/>
            <person name="Howson R.W."/>
            <person name="Weissman J.S."/>
            <person name="O'Shea E.K."/>
        </authorList>
    </citation>
    <scope>SUBCELLULAR LOCATION [LARGE SCALE ANALYSIS]</scope>
</reference>
<reference key="7">
    <citation type="journal article" date="2003" name="Nature">
        <title>Global analysis of protein expression in yeast.</title>
        <authorList>
            <person name="Ghaemmaghami S."/>
            <person name="Huh W.-K."/>
            <person name="Bower K."/>
            <person name="Howson R.W."/>
            <person name="Belle A."/>
            <person name="Dephoure N."/>
            <person name="O'Shea E.K."/>
            <person name="Weissman J.S."/>
        </authorList>
    </citation>
    <scope>LEVEL OF PROTEIN EXPRESSION [LARGE SCALE ANALYSIS]</scope>
</reference>
<reference key="8">
    <citation type="journal article" date="2008" name="Mol. Cell. Proteomics">
        <title>A multidimensional chromatography technology for in-depth phosphoproteome analysis.</title>
        <authorList>
            <person name="Albuquerque C.P."/>
            <person name="Smolka M.B."/>
            <person name="Payne S.H."/>
            <person name="Bafna V."/>
            <person name="Eng J."/>
            <person name="Zhou H."/>
        </authorList>
    </citation>
    <scope>PHOSPHORYLATION [LARGE SCALE ANALYSIS] AT SER-1231 AND SER-1233</scope>
    <scope>IDENTIFICATION BY MASS SPECTROMETRY [LARGE SCALE ANALYSIS]</scope>
</reference>
<protein>
    <recommendedName>
        <fullName>Sister chromatid cohesion protein PDS5</fullName>
    </recommendedName>
    <alternativeName>
        <fullName>Precocious dissociation of sisters protein 5</fullName>
    </alternativeName>
</protein>
<evidence type="ECO:0000256" key="1">
    <source>
        <dbReference type="SAM" id="MobiDB-lite"/>
    </source>
</evidence>
<evidence type="ECO:0000269" key="2">
    <source>
    </source>
</evidence>
<evidence type="ECO:0000269" key="3">
    <source>
    </source>
</evidence>
<evidence type="ECO:0000269" key="4">
    <source>
    </source>
</evidence>
<evidence type="ECO:0000269" key="5">
    <source>
    </source>
</evidence>
<evidence type="ECO:0000269" key="6">
    <source>
    </source>
</evidence>
<evidence type="ECO:0000305" key="7"/>
<evidence type="ECO:0007744" key="8">
    <source>
    </source>
</evidence>
<evidence type="ECO:0007829" key="9">
    <source>
        <dbReference type="PDB" id="5FRP"/>
    </source>
</evidence>
<comment type="function">
    <text evidence="2 3">Essential for the establishment and maintenance of sister chromatid cohesion at centromere proximal and distal regions during S phase. Also required for chromosomal condensation.</text>
</comment>
<comment type="subcellular location">
    <subcellularLocation>
        <location evidence="2 5">Nucleus</location>
    </subcellularLocation>
</comment>
<comment type="PTM">
    <text evidence="4">Acetylated by ECO1.</text>
</comment>
<comment type="miscellaneous">
    <text evidence="6">Present with 7720 molecules/cell in log phase SD medium.</text>
</comment>
<comment type="similarity">
    <text evidence="7">Belongs to the PDS5 family.</text>
</comment>
<feature type="chain" id="PRO_0000058280" description="Sister chromatid cohesion protein PDS5">
    <location>
        <begin position="1"/>
        <end position="1277"/>
    </location>
</feature>
<feature type="repeat" description="HEAT">
    <location>
        <begin position="393"/>
        <end position="429"/>
    </location>
</feature>
<feature type="region of interest" description="Disordered" evidence="1">
    <location>
        <begin position="1201"/>
        <end position="1277"/>
    </location>
</feature>
<feature type="compositionally biased region" description="Basic residues" evidence="1">
    <location>
        <begin position="1208"/>
        <end position="1217"/>
    </location>
</feature>
<feature type="compositionally biased region" description="Acidic residues" evidence="1">
    <location>
        <begin position="1221"/>
        <end position="1237"/>
    </location>
</feature>
<feature type="compositionally biased region" description="Basic and acidic residues" evidence="1">
    <location>
        <begin position="1244"/>
        <end position="1254"/>
    </location>
</feature>
<feature type="compositionally biased region" description="Acidic residues" evidence="1">
    <location>
        <begin position="1266"/>
        <end position="1277"/>
    </location>
</feature>
<feature type="modified residue" description="Phosphoserine" evidence="8">
    <location>
        <position position="1231"/>
    </location>
</feature>
<feature type="modified residue" description="Phosphoserine" evidence="8">
    <location>
        <position position="1233"/>
    </location>
</feature>
<feature type="strand" evidence="9">
    <location>
        <begin position="19"/>
        <end position="21"/>
    </location>
</feature>
<feature type="helix" evidence="9">
    <location>
        <begin position="25"/>
        <end position="41"/>
    </location>
</feature>
<feature type="strand" evidence="9">
    <location>
        <begin position="44"/>
        <end position="47"/>
    </location>
</feature>
<feature type="helix" evidence="9">
    <location>
        <begin position="53"/>
        <end position="58"/>
    </location>
</feature>
<feature type="helix" evidence="9">
    <location>
        <begin position="62"/>
        <end position="65"/>
    </location>
</feature>
<feature type="helix" evidence="9">
    <location>
        <begin position="70"/>
        <end position="87"/>
    </location>
</feature>
<feature type="helix" evidence="9">
    <location>
        <begin position="95"/>
        <end position="113"/>
    </location>
</feature>
<feature type="helix" evidence="9">
    <location>
        <begin position="120"/>
        <end position="132"/>
    </location>
</feature>
<feature type="helix" evidence="9">
    <location>
        <begin position="136"/>
        <end position="141"/>
    </location>
</feature>
<feature type="helix" evidence="9">
    <location>
        <begin position="145"/>
        <end position="157"/>
    </location>
</feature>
<feature type="helix" evidence="9">
    <location>
        <begin position="165"/>
        <end position="167"/>
    </location>
</feature>
<feature type="helix" evidence="9">
    <location>
        <begin position="168"/>
        <end position="180"/>
    </location>
</feature>
<feature type="helix" evidence="9">
    <location>
        <begin position="187"/>
        <end position="199"/>
    </location>
</feature>
<feature type="helix" evidence="9">
    <location>
        <begin position="215"/>
        <end position="226"/>
    </location>
</feature>
<feature type="helix" evidence="9">
    <location>
        <begin position="228"/>
        <end position="247"/>
    </location>
</feature>
<feature type="helix" evidence="9">
    <location>
        <begin position="254"/>
        <end position="272"/>
    </location>
</feature>
<feature type="helix" evidence="9">
    <location>
        <begin position="274"/>
        <end position="279"/>
    </location>
</feature>
<feature type="helix" evidence="9">
    <location>
        <begin position="281"/>
        <end position="288"/>
    </location>
</feature>
<feature type="helix" evidence="9">
    <location>
        <begin position="293"/>
        <end position="306"/>
    </location>
</feature>
<feature type="helix" evidence="9">
    <location>
        <begin position="315"/>
        <end position="318"/>
    </location>
</feature>
<feature type="helix" evidence="9">
    <location>
        <begin position="320"/>
        <end position="327"/>
    </location>
</feature>
<feature type="helix" evidence="9">
    <location>
        <begin position="328"/>
        <end position="331"/>
    </location>
</feature>
<feature type="helix" evidence="9">
    <location>
        <begin position="335"/>
        <end position="343"/>
    </location>
</feature>
<feature type="helix" evidence="9">
    <location>
        <begin position="345"/>
        <end position="351"/>
    </location>
</feature>
<feature type="helix" evidence="9">
    <location>
        <begin position="358"/>
        <end position="366"/>
    </location>
</feature>
<feature type="helix" evidence="9">
    <location>
        <begin position="372"/>
        <end position="384"/>
    </location>
</feature>
<feature type="helix" evidence="9">
    <location>
        <begin position="387"/>
        <end position="393"/>
    </location>
</feature>
<feature type="helix" evidence="9">
    <location>
        <begin position="397"/>
        <end position="405"/>
    </location>
</feature>
<feature type="helix" evidence="9">
    <location>
        <begin position="406"/>
        <end position="408"/>
    </location>
</feature>
<feature type="helix" evidence="9">
    <location>
        <begin position="412"/>
        <end position="431"/>
    </location>
</feature>
<feature type="strand" evidence="9">
    <location>
        <begin position="437"/>
        <end position="439"/>
    </location>
</feature>
<feature type="helix" evidence="9">
    <location>
        <begin position="440"/>
        <end position="446"/>
    </location>
</feature>
<feature type="helix" evidence="9">
    <location>
        <begin position="449"/>
        <end position="455"/>
    </location>
</feature>
<feature type="helix" evidence="9">
    <location>
        <begin position="456"/>
        <end position="459"/>
    </location>
</feature>
<feature type="helix" evidence="9">
    <location>
        <begin position="462"/>
        <end position="475"/>
    </location>
</feature>
<feature type="helix" evidence="9">
    <location>
        <begin position="483"/>
        <end position="495"/>
    </location>
</feature>
<feature type="helix" evidence="9">
    <location>
        <begin position="499"/>
        <end position="526"/>
    </location>
</feature>
<feature type="helix" evidence="9">
    <location>
        <begin position="527"/>
        <end position="529"/>
    </location>
</feature>
<feature type="turn" evidence="9">
    <location>
        <begin position="530"/>
        <end position="532"/>
    </location>
</feature>
<feature type="strand" evidence="9">
    <location>
        <begin position="535"/>
        <end position="539"/>
    </location>
</feature>
<feature type="helix" evidence="9">
    <location>
        <begin position="540"/>
        <end position="555"/>
    </location>
</feature>
<feature type="helix" evidence="9">
    <location>
        <begin position="561"/>
        <end position="574"/>
    </location>
</feature>
<feature type="helix" evidence="9">
    <location>
        <begin position="577"/>
        <end position="587"/>
    </location>
</feature>
<feature type="helix" evidence="9">
    <location>
        <begin position="593"/>
        <end position="607"/>
    </location>
</feature>
<feature type="helix" evidence="9">
    <location>
        <begin position="626"/>
        <end position="640"/>
    </location>
</feature>
<feature type="strand" evidence="9">
    <location>
        <begin position="643"/>
        <end position="646"/>
    </location>
</feature>
<feature type="helix" evidence="9">
    <location>
        <begin position="648"/>
        <end position="653"/>
    </location>
</feature>
<feature type="helix" evidence="9">
    <location>
        <begin position="662"/>
        <end position="678"/>
    </location>
</feature>
<feature type="turn" evidence="9">
    <location>
        <begin position="680"/>
        <end position="682"/>
    </location>
</feature>
<feature type="helix" evidence="9">
    <location>
        <begin position="683"/>
        <end position="690"/>
    </location>
</feature>
<feature type="helix" evidence="9">
    <location>
        <begin position="692"/>
        <end position="696"/>
    </location>
</feature>
<dbReference type="EMBL" id="Z49259">
    <property type="protein sequence ID" value="CAA89222.1"/>
    <property type="molecule type" value="Genomic_DNA"/>
</dbReference>
<dbReference type="EMBL" id="Z48952">
    <property type="protein sequence ID" value="CAA88801.1"/>
    <property type="molecule type" value="Genomic_DNA"/>
</dbReference>
<dbReference type="EMBL" id="BK006946">
    <property type="protein sequence ID" value="DAA09974.1"/>
    <property type="molecule type" value="Genomic_DNA"/>
</dbReference>
<dbReference type="PIR" id="S54451">
    <property type="entry name" value="S54451"/>
</dbReference>
<dbReference type="RefSeq" id="NP_013793.1">
    <property type="nucleotide sequence ID" value="NM_001182575.1"/>
</dbReference>
<dbReference type="PDB" id="5FRP">
    <property type="method" value="X-ray"/>
    <property type="resolution" value="2.90 A"/>
    <property type="chains" value="A/B=1-701"/>
</dbReference>
<dbReference type="PDB" id="5FRR">
    <property type="method" value="X-ray"/>
    <property type="resolution" value="5.80 A"/>
    <property type="chains" value="A/B=1-701"/>
</dbReference>
<dbReference type="PDB" id="5FRS">
    <property type="method" value="X-ray"/>
    <property type="resolution" value="4.07 A"/>
    <property type="chains" value="A=1-701"/>
</dbReference>
<dbReference type="PDBsum" id="5FRP"/>
<dbReference type="PDBsum" id="5FRR"/>
<dbReference type="PDBsum" id="5FRS"/>
<dbReference type="SMR" id="Q04264"/>
<dbReference type="BioGRID" id="35251">
    <property type="interactions" value="632"/>
</dbReference>
<dbReference type="DIP" id="DIP-6799N"/>
<dbReference type="FunCoup" id="Q04264">
    <property type="interactions" value="1067"/>
</dbReference>
<dbReference type="IntAct" id="Q04264">
    <property type="interactions" value="16"/>
</dbReference>
<dbReference type="MINT" id="Q04264"/>
<dbReference type="STRING" id="4932.YMR076C"/>
<dbReference type="GlyGen" id="Q04264">
    <property type="glycosylation" value="1 site"/>
</dbReference>
<dbReference type="iPTMnet" id="Q04264"/>
<dbReference type="PaxDb" id="4932-YMR076C"/>
<dbReference type="PeptideAtlas" id="Q04264"/>
<dbReference type="EnsemblFungi" id="YMR076C_mRNA">
    <property type="protein sequence ID" value="YMR076C"/>
    <property type="gene ID" value="YMR076C"/>
</dbReference>
<dbReference type="GeneID" id="855099"/>
<dbReference type="KEGG" id="sce:YMR076C"/>
<dbReference type="AGR" id="SGD:S000004681"/>
<dbReference type="SGD" id="S000004681">
    <property type="gene designation" value="PDS5"/>
</dbReference>
<dbReference type="VEuPathDB" id="FungiDB:YMR076C"/>
<dbReference type="eggNOG" id="KOG1525">
    <property type="taxonomic scope" value="Eukaryota"/>
</dbReference>
<dbReference type="GeneTree" id="ENSGT00940000168106"/>
<dbReference type="HOGENOM" id="CLU_002562_1_0_1"/>
<dbReference type="InParanoid" id="Q04264"/>
<dbReference type="OMA" id="YPPAYNM"/>
<dbReference type="OrthoDB" id="200660at2759"/>
<dbReference type="BioCyc" id="YEAST:G3O-32778-MONOMER"/>
<dbReference type="Reactome" id="R-SCE-2468052">
    <property type="pathway name" value="Establishment of Sister Chromatid Cohesion"/>
</dbReference>
<dbReference type="Reactome" id="R-SCE-2500257">
    <property type="pathway name" value="Resolution of Sister Chromatid Cohesion"/>
</dbReference>
<dbReference type="BioGRID-ORCS" id="855099">
    <property type="hits" value="2 hits in 10 CRISPR screens"/>
</dbReference>
<dbReference type="EvolutionaryTrace" id="Q04264"/>
<dbReference type="PRO" id="PR:Q04264"/>
<dbReference type="Proteomes" id="UP000002311">
    <property type="component" value="Chromosome XIII"/>
</dbReference>
<dbReference type="RNAct" id="Q04264">
    <property type="molecule type" value="protein"/>
</dbReference>
<dbReference type="GO" id="GO:0000785">
    <property type="term" value="C:chromatin"/>
    <property type="evidence" value="ECO:0000318"/>
    <property type="project" value="GO_Central"/>
</dbReference>
<dbReference type="GO" id="GO:0000794">
    <property type="term" value="C:condensed nuclear chromosome"/>
    <property type="evidence" value="ECO:0000314"/>
    <property type="project" value="SGD"/>
</dbReference>
<dbReference type="GO" id="GO:0005829">
    <property type="term" value="C:cytosol"/>
    <property type="evidence" value="ECO:0000314"/>
    <property type="project" value="SGD"/>
</dbReference>
<dbReference type="GO" id="GO:0035808">
    <property type="term" value="C:meiotic recombination initiation complex"/>
    <property type="evidence" value="ECO:0000314"/>
    <property type="project" value="SGD"/>
</dbReference>
<dbReference type="GO" id="GO:0005634">
    <property type="term" value="C:nucleus"/>
    <property type="evidence" value="ECO:0000314"/>
    <property type="project" value="SGD"/>
</dbReference>
<dbReference type="GO" id="GO:0005198">
    <property type="term" value="F:structural molecule activity"/>
    <property type="evidence" value="ECO:0000315"/>
    <property type="project" value="SGD"/>
</dbReference>
<dbReference type="GO" id="GO:0051301">
    <property type="term" value="P:cell division"/>
    <property type="evidence" value="ECO:0007669"/>
    <property type="project" value="UniProtKB-KW"/>
</dbReference>
<dbReference type="GO" id="GO:0140588">
    <property type="term" value="P:chromatin looping"/>
    <property type="evidence" value="ECO:0000315"/>
    <property type="project" value="SGD"/>
</dbReference>
<dbReference type="GO" id="GO:0006281">
    <property type="term" value="P:DNA repair"/>
    <property type="evidence" value="ECO:0000318"/>
    <property type="project" value="GO_Central"/>
</dbReference>
<dbReference type="GO" id="GO:0006302">
    <property type="term" value="P:double-strand break repair"/>
    <property type="evidence" value="ECO:0000315"/>
    <property type="project" value="SGD"/>
</dbReference>
<dbReference type="GO" id="GO:0007129">
    <property type="term" value="P:homologous chromosome pairing at meiosis"/>
    <property type="evidence" value="ECO:0000315"/>
    <property type="project" value="SGD"/>
</dbReference>
<dbReference type="GO" id="GO:0051321">
    <property type="term" value="P:meiotic cell cycle"/>
    <property type="evidence" value="ECO:0000315"/>
    <property type="project" value="SGD"/>
</dbReference>
<dbReference type="GO" id="GO:0042138">
    <property type="term" value="P:meiotic DNA double-strand break formation"/>
    <property type="evidence" value="ECO:0000315"/>
    <property type="project" value="SGD"/>
</dbReference>
<dbReference type="GO" id="GO:0007076">
    <property type="term" value="P:mitotic chromosome condensation"/>
    <property type="evidence" value="ECO:0000315"/>
    <property type="project" value="SGD"/>
</dbReference>
<dbReference type="GO" id="GO:0007064">
    <property type="term" value="P:mitotic sister chromatid cohesion"/>
    <property type="evidence" value="ECO:0000315"/>
    <property type="project" value="SGD"/>
</dbReference>
<dbReference type="GO" id="GO:0007130">
    <property type="term" value="P:synaptonemal complex assembly"/>
    <property type="evidence" value="ECO:0000315"/>
    <property type="project" value="SGD"/>
</dbReference>
<dbReference type="CDD" id="cd19953">
    <property type="entry name" value="PDS5"/>
    <property type="match status" value="1"/>
</dbReference>
<dbReference type="FunFam" id="1.25.10.10:FF:000659">
    <property type="entry name" value="PDS5p Cohesion maintenance factor"/>
    <property type="match status" value="1"/>
</dbReference>
<dbReference type="Gene3D" id="1.25.10.10">
    <property type="entry name" value="Leucine-rich Repeat Variant"/>
    <property type="match status" value="1"/>
</dbReference>
<dbReference type="InterPro" id="IPR011989">
    <property type="entry name" value="ARM-like"/>
</dbReference>
<dbReference type="InterPro" id="IPR016024">
    <property type="entry name" value="ARM-type_fold"/>
</dbReference>
<dbReference type="InterPro" id="IPR039776">
    <property type="entry name" value="Pds5"/>
</dbReference>
<dbReference type="PANTHER" id="PTHR12663">
    <property type="entry name" value="ANDROGEN INDUCED INHIBITOR OF PROLIFERATION AS3 / PDS5-RELATED"/>
    <property type="match status" value="1"/>
</dbReference>
<dbReference type="PANTHER" id="PTHR12663:SF0">
    <property type="entry name" value="PRECOCIOUS DISSOCIATION OF SISTERS 5, ISOFORM A"/>
    <property type="match status" value="1"/>
</dbReference>
<dbReference type="Pfam" id="PF20168">
    <property type="entry name" value="PDS5"/>
    <property type="match status" value="1"/>
</dbReference>
<dbReference type="SUPFAM" id="SSF48371">
    <property type="entry name" value="ARM repeat"/>
    <property type="match status" value="1"/>
</dbReference>
<proteinExistence type="evidence at protein level"/>